<evidence type="ECO:0000250" key="1"/>
<evidence type="ECO:0000255" key="2"/>
<evidence type="ECO:0000256" key="3">
    <source>
        <dbReference type="SAM" id="MobiDB-lite"/>
    </source>
</evidence>
<evidence type="ECO:0000305" key="4"/>
<sequence length="1256" mass="140123">MRTRLAGTSEDGHLCPVEAPFPNVDFLLHQQLQQEQDVYANSTTNATASPPIAPTSVLPRPSRPSQSSAAERTSPESPSVRQSPTKRDRNPGPSSISGAGPLNLEHQSPSQQSQNQQQQQQQQQQQQQQQQQQQSFYARSRRSGNFNWKLSHSRNGSIEKPPPSFFSSSFSHSPSTPPLSLGAPANGAAHSKEMEKEEEQKFVGKRPRIRSPWAITFVTLLISILGIGFLALVLNSSFTRHIDPKGCRMSYMRPGYAKFDDFDTEHTRFASKYSLYLYRELGIENDAKVRGVPVLFIPGNAGSYKQVRPIAAEAANYFHDVLQQDESAVKAGARSLDFFTVDFNEDITAFHGQTLLDQAEYLNEAIRYILSLYLDRTRSDRDPNLPDPTSVIVLGHSMGGVVARTMLIMPNYQANSINTIITMSAPHARPPVSFDSEIVKTYKDINDYWRRAYSQQWANNNPLWHVTLVSIAGGGLDTVVPSDYASVESLVPDTHGFTVFTTSIPNVWTSMDHAAILWCDQFRKALVKAIFDVVDVNRAAQTKPRADRMRVFKRWFLTGMEEVAEKTVPSKDPSTLLTLEDNLSSVIAQGERLVLRSLGASGAVRAHLLPIPPSGSPEAKRFTLLTDHKLDVSSESGRLEVLFCSVFPMQPGQAVAGFAAQINLAGDSSASTRLACNNAASDVVTLPASLRSSQYPFSKEGEPPKTHFSYLQYDVEDIAEHQYVAVIEKTHTPTPGFVIAEFSDVSQSHRTRHISLRRLLAFGMKFRLPSSRPMVSELKVPTMQSSLLAYNLEISEQNCGKQQELFAPLIRQYLTEPYESKFFVNAREAAVSIHGVAPYVPPPLKSRSTEDGLSFQFWTDPTCASNINIKMSIDVMGSLGKLYMRYRTVFAAFPLLVVTLVLRKQFRIYDTTGVFISFSESLDLCLRQSIPLVLAFLTFLSLFIWNSSSSATANIWNWANVTSGAIDFHQNDLLIGTQDPFFWFLVPVIGLICVGICTVFNYMTLTLVHILSTAVSLLSFRPGWIRNDERRKALPLPAFYPTSPRRRMVTTAILLVLVSTLIPYQFAYLVCCLVQLTTTVRAQRLASDLRSAANSNFYNYVHSILLLMLWILPINLPILVVWIHNLAVHWLTPFSSHHNVLSIMPFIILVETLTTGKMVPRVNSRFKHFTSVLLFGIALYAAIYGVSYAYMLHYLVNLVAAWLAIVHSTSDNWSVLSGIKHISCTLFDAGNTNNVGGVNGTNNTMLAEDCKMRKEP</sequence>
<feature type="chain" id="PRO_0000277640" description="GPI inositol-deacylase">
    <location>
        <begin position="1"/>
        <end position="1256"/>
    </location>
</feature>
<feature type="transmembrane region" description="Helical" evidence="2">
    <location>
        <begin position="214"/>
        <end position="234"/>
    </location>
</feature>
<feature type="transmembrane region" description="Helical" evidence="2">
    <location>
        <begin position="882"/>
        <end position="902"/>
    </location>
</feature>
<feature type="transmembrane region" description="Helical" evidence="2">
    <location>
        <begin position="929"/>
        <end position="949"/>
    </location>
</feature>
<feature type="transmembrane region" description="Helical" evidence="2">
    <location>
        <begin position="980"/>
        <end position="1000"/>
    </location>
</feature>
<feature type="transmembrane region" description="Helical" evidence="2">
    <location>
        <begin position="1005"/>
        <end position="1025"/>
    </location>
</feature>
<feature type="transmembrane region" description="Helical" evidence="2">
    <location>
        <begin position="1053"/>
        <end position="1073"/>
    </location>
</feature>
<feature type="transmembrane region" description="Helical" evidence="2">
    <location>
        <begin position="1103"/>
        <end position="1123"/>
    </location>
</feature>
<feature type="transmembrane region" description="Helical" evidence="2">
    <location>
        <begin position="1130"/>
        <end position="1150"/>
    </location>
</feature>
<feature type="transmembrane region" description="Helical" evidence="2">
    <location>
        <begin position="1172"/>
        <end position="1192"/>
    </location>
</feature>
<feature type="region of interest" description="Disordered" evidence="3">
    <location>
        <begin position="37"/>
        <end position="203"/>
    </location>
</feature>
<feature type="compositionally biased region" description="Polar residues" evidence="3">
    <location>
        <begin position="37"/>
        <end position="48"/>
    </location>
</feature>
<feature type="compositionally biased region" description="Low complexity" evidence="3">
    <location>
        <begin position="59"/>
        <end position="68"/>
    </location>
</feature>
<feature type="compositionally biased region" description="Polar residues" evidence="3">
    <location>
        <begin position="69"/>
        <end position="83"/>
    </location>
</feature>
<feature type="compositionally biased region" description="Low complexity" evidence="3">
    <location>
        <begin position="107"/>
        <end position="135"/>
    </location>
</feature>
<feature type="compositionally biased region" description="Polar residues" evidence="3">
    <location>
        <begin position="143"/>
        <end position="156"/>
    </location>
</feature>
<feature type="compositionally biased region" description="Low complexity" evidence="3">
    <location>
        <begin position="165"/>
        <end position="180"/>
    </location>
</feature>
<feature type="compositionally biased region" description="Basic and acidic residues" evidence="3">
    <location>
        <begin position="190"/>
        <end position="202"/>
    </location>
</feature>
<feature type="active site" evidence="1">
    <location>
        <position position="397"/>
    </location>
</feature>
<feature type="glycosylation site" description="N-linked (GlcNAc...) asparagine" evidence="2">
    <location>
        <position position="41"/>
    </location>
</feature>
<feature type="glycosylation site" description="N-linked (GlcNAc...) asparagine" evidence="2">
    <location>
        <position position="45"/>
    </location>
</feature>
<feature type="glycosylation site" description="N-linked (GlcNAc...) asparagine" evidence="2">
    <location>
        <position position="155"/>
    </location>
</feature>
<feature type="glycosylation site" description="N-linked (GlcNAc...) asparagine" evidence="2">
    <location>
        <position position="235"/>
    </location>
</feature>
<feature type="glycosylation site" description="N-linked (GlcNAc...) asparagine" evidence="2">
    <location>
        <position position="582"/>
    </location>
</feature>
<feature type="glycosylation site" description="N-linked (GlcNAc...) asparagine" evidence="2">
    <location>
        <position position="960"/>
    </location>
</feature>
<feature type="glycosylation site" description="N-linked (GlcNAc...) asparagine" evidence="2">
    <location>
        <position position="1212"/>
    </location>
</feature>
<feature type="glycosylation site" description="N-linked (GlcNAc...) asparagine" evidence="2">
    <location>
        <position position="1239"/>
    </location>
</feature>
<feature type="glycosylation site" description="N-linked (GlcNAc...) asparagine" evidence="2">
    <location>
        <position position="1242"/>
    </location>
</feature>
<gene>
    <name type="primary">bst-1</name>
    <name type="ORF">B2N18.110</name>
    <name type="ORF">NCU08021</name>
</gene>
<proteinExistence type="inferred from homology"/>
<accession>Q7SAM0</accession>
<accession>Q6MFS7</accession>
<organism>
    <name type="scientific">Neurospora crassa (strain ATCC 24698 / 74-OR23-1A / CBS 708.71 / DSM 1257 / FGSC 987)</name>
    <dbReference type="NCBI Taxonomy" id="367110"/>
    <lineage>
        <taxon>Eukaryota</taxon>
        <taxon>Fungi</taxon>
        <taxon>Dikarya</taxon>
        <taxon>Ascomycota</taxon>
        <taxon>Pezizomycotina</taxon>
        <taxon>Sordariomycetes</taxon>
        <taxon>Sordariomycetidae</taxon>
        <taxon>Sordariales</taxon>
        <taxon>Sordariaceae</taxon>
        <taxon>Neurospora</taxon>
    </lineage>
</organism>
<reference key="1">
    <citation type="journal article" date="2003" name="Nucleic Acids Res.">
        <title>What's in the genome of a filamentous fungus? Analysis of the Neurospora genome sequence.</title>
        <authorList>
            <person name="Mannhaupt G."/>
            <person name="Montrone C."/>
            <person name="Haase D."/>
            <person name="Mewes H.-W."/>
            <person name="Aign V."/>
            <person name="Hoheisel J.D."/>
            <person name="Fartmann B."/>
            <person name="Nyakatura G."/>
            <person name="Kempken F."/>
            <person name="Maier J."/>
            <person name="Schulte U."/>
        </authorList>
    </citation>
    <scope>NUCLEOTIDE SEQUENCE [LARGE SCALE GENOMIC DNA]</scope>
    <source>
        <strain>ATCC 24698 / 74-OR23-1A / CBS 708.71 / DSM 1257 / FGSC 987</strain>
    </source>
</reference>
<reference key="2">
    <citation type="journal article" date="2003" name="Nature">
        <title>The genome sequence of the filamentous fungus Neurospora crassa.</title>
        <authorList>
            <person name="Galagan J.E."/>
            <person name="Calvo S.E."/>
            <person name="Borkovich K.A."/>
            <person name="Selker E.U."/>
            <person name="Read N.D."/>
            <person name="Jaffe D.B."/>
            <person name="FitzHugh W."/>
            <person name="Ma L.-J."/>
            <person name="Smirnov S."/>
            <person name="Purcell S."/>
            <person name="Rehman B."/>
            <person name="Elkins T."/>
            <person name="Engels R."/>
            <person name="Wang S."/>
            <person name="Nielsen C.B."/>
            <person name="Butler J."/>
            <person name="Endrizzi M."/>
            <person name="Qui D."/>
            <person name="Ianakiev P."/>
            <person name="Bell-Pedersen D."/>
            <person name="Nelson M.A."/>
            <person name="Werner-Washburne M."/>
            <person name="Selitrennikoff C.P."/>
            <person name="Kinsey J.A."/>
            <person name="Braun E.L."/>
            <person name="Zelter A."/>
            <person name="Schulte U."/>
            <person name="Kothe G.O."/>
            <person name="Jedd G."/>
            <person name="Mewes H.-W."/>
            <person name="Staben C."/>
            <person name="Marcotte E."/>
            <person name="Greenberg D."/>
            <person name="Roy A."/>
            <person name="Foley K."/>
            <person name="Naylor J."/>
            <person name="Stange-Thomann N."/>
            <person name="Barrett R."/>
            <person name="Gnerre S."/>
            <person name="Kamal M."/>
            <person name="Kamvysselis M."/>
            <person name="Mauceli E.W."/>
            <person name="Bielke C."/>
            <person name="Rudd S."/>
            <person name="Frishman D."/>
            <person name="Krystofova S."/>
            <person name="Rasmussen C."/>
            <person name="Metzenberg R.L."/>
            <person name="Perkins D.D."/>
            <person name="Kroken S."/>
            <person name="Cogoni C."/>
            <person name="Macino G."/>
            <person name="Catcheside D.E.A."/>
            <person name="Li W."/>
            <person name="Pratt R.J."/>
            <person name="Osmani S.A."/>
            <person name="DeSouza C.P.C."/>
            <person name="Glass N.L."/>
            <person name="Orbach M.J."/>
            <person name="Berglund J.A."/>
            <person name="Voelker R."/>
            <person name="Yarden O."/>
            <person name="Plamann M."/>
            <person name="Seiler S."/>
            <person name="Dunlap J.C."/>
            <person name="Radford A."/>
            <person name="Aramayo R."/>
            <person name="Natvig D.O."/>
            <person name="Alex L.A."/>
            <person name="Mannhaupt G."/>
            <person name="Ebbole D.J."/>
            <person name="Freitag M."/>
            <person name="Paulsen I."/>
            <person name="Sachs M.S."/>
            <person name="Lander E.S."/>
            <person name="Nusbaum C."/>
            <person name="Birren B.W."/>
        </authorList>
    </citation>
    <scope>NUCLEOTIDE SEQUENCE [LARGE SCALE GENOMIC DNA]</scope>
    <source>
        <strain>ATCC 24698 / 74-OR23-1A / CBS 708.71 / DSM 1257 / FGSC 987</strain>
    </source>
</reference>
<dbReference type="EC" id="3.1.-.-"/>
<dbReference type="EMBL" id="BX897674">
    <property type="protein sequence ID" value="CAE85512.1"/>
    <property type="status" value="ALT_SEQ"/>
    <property type="molecule type" value="Genomic_DNA"/>
</dbReference>
<dbReference type="EMBL" id="CM002239">
    <property type="protein sequence ID" value="EAA33455.1"/>
    <property type="molecule type" value="Genomic_DNA"/>
</dbReference>
<dbReference type="RefSeq" id="XP_962691.1">
    <property type="nucleotide sequence ID" value="XM_957598.3"/>
</dbReference>
<dbReference type="SMR" id="Q7SAM0"/>
<dbReference type="FunCoup" id="Q7SAM0">
    <property type="interactions" value="42"/>
</dbReference>
<dbReference type="STRING" id="367110.Q7SAM0"/>
<dbReference type="ESTHER" id="neucr-q6mfs7">
    <property type="family name" value="PGAP1"/>
</dbReference>
<dbReference type="GlyCosmos" id="Q7SAM0">
    <property type="glycosylation" value="9 sites, No reported glycans"/>
</dbReference>
<dbReference type="PaxDb" id="5141-EFNCRP00000008286"/>
<dbReference type="EnsemblFungi" id="EAA33455">
    <property type="protein sequence ID" value="EAA33455"/>
    <property type="gene ID" value="NCU08021"/>
</dbReference>
<dbReference type="GeneID" id="3878857"/>
<dbReference type="KEGG" id="ncr:NCU08021"/>
<dbReference type="VEuPathDB" id="FungiDB:NCU08021"/>
<dbReference type="HOGENOM" id="CLU_006103_1_0_1"/>
<dbReference type="InParanoid" id="Q7SAM0"/>
<dbReference type="OMA" id="WVRNLAV"/>
<dbReference type="OrthoDB" id="348976at2759"/>
<dbReference type="Proteomes" id="UP000001805">
    <property type="component" value="Chromosome 4, Linkage Group IV"/>
</dbReference>
<dbReference type="GO" id="GO:0005783">
    <property type="term" value="C:endoplasmic reticulum"/>
    <property type="evidence" value="ECO:0000318"/>
    <property type="project" value="GO_Central"/>
</dbReference>
<dbReference type="GO" id="GO:0005789">
    <property type="term" value="C:endoplasmic reticulum membrane"/>
    <property type="evidence" value="ECO:0007669"/>
    <property type="project" value="UniProtKB-SubCell"/>
</dbReference>
<dbReference type="GO" id="GO:0050185">
    <property type="term" value="F:phosphatidylinositol deacylase activity"/>
    <property type="evidence" value="ECO:0000318"/>
    <property type="project" value="GO_Central"/>
</dbReference>
<dbReference type="GO" id="GO:0006506">
    <property type="term" value="P:GPI anchor biosynthetic process"/>
    <property type="evidence" value="ECO:0000318"/>
    <property type="project" value="GO_Central"/>
</dbReference>
<dbReference type="GO" id="GO:0015031">
    <property type="term" value="P:protein transport"/>
    <property type="evidence" value="ECO:0007669"/>
    <property type="project" value="UniProtKB-KW"/>
</dbReference>
<dbReference type="FunFam" id="3.40.50.1820:FF:000056">
    <property type="entry name" value="GPI inositol-deacylase"/>
    <property type="match status" value="1"/>
</dbReference>
<dbReference type="Gene3D" id="3.40.50.1820">
    <property type="entry name" value="alpha/beta hydrolase"/>
    <property type="match status" value="1"/>
</dbReference>
<dbReference type="InterPro" id="IPR029058">
    <property type="entry name" value="AB_hydrolase_fold"/>
</dbReference>
<dbReference type="InterPro" id="IPR012908">
    <property type="entry name" value="PGAP1-ab_dom-like"/>
</dbReference>
<dbReference type="InterPro" id="IPR039529">
    <property type="entry name" value="PGAP1/BST1"/>
</dbReference>
<dbReference type="InterPro" id="IPR056824">
    <property type="entry name" value="PGAP1_TMD"/>
</dbReference>
<dbReference type="PANTHER" id="PTHR15495:SF7">
    <property type="entry name" value="GPI INOSITOL-DEACYLASE"/>
    <property type="match status" value="1"/>
</dbReference>
<dbReference type="PANTHER" id="PTHR15495">
    <property type="entry name" value="NEGATIVE REGULATOR OF VESICLE FORMATION-RELATED"/>
    <property type="match status" value="1"/>
</dbReference>
<dbReference type="Pfam" id="PF07819">
    <property type="entry name" value="PGAP1"/>
    <property type="match status" value="1"/>
</dbReference>
<dbReference type="Pfam" id="PF25141">
    <property type="entry name" value="PGAP1_2nd"/>
    <property type="match status" value="1"/>
</dbReference>
<dbReference type="Pfam" id="PF25140">
    <property type="entry name" value="PGAP1_TMD"/>
    <property type="match status" value="1"/>
</dbReference>
<dbReference type="SUPFAM" id="SSF53474">
    <property type="entry name" value="alpha/beta-Hydrolases"/>
    <property type="match status" value="1"/>
</dbReference>
<dbReference type="PROSITE" id="PS00120">
    <property type="entry name" value="LIPASE_SER"/>
    <property type="match status" value="1"/>
</dbReference>
<protein>
    <recommendedName>
        <fullName>GPI inositol-deacylase</fullName>
        <ecNumber>3.1.-.-</ecNumber>
    </recommendedName>
</protein>
<name>BST1_NEUCR</name>
<comment type="function">
    <text evidence="1">Involved in inositol deacylation of GPI-anchored proteins which plays important roles in the quality control and ER-associated degradation of GPI-anchored proteins.</text>
</comment>
<comment type="subcellular location">
    <subcellularLocation>
        <location evidence="1">Endoplasmic reticulum membrane</location>
        <topology evidence="1">Multi-pass membrane protein</topology>
    </subcellularLocation>
</comment>
<comment type="similarity">
    <text evidence="4">Belongs to the GPI inositol-deacylase family.</text>
</comment>
<comment type="sequence caution" evidence="4">
    <conflict type="erroneous gene model prediction">
        <sequence resource="EMBL-CDS" id="CAE85512"/>
    </conflict>
</comment>
<keyword id="KW-0256">Endoplasmic reticulum</keyword>
<keyword id="KW-0325">Glycoprotein</keyword>
<keyword id="KW-0378">Hydrolase</keyword>
<keyword id="KW-0472">Membrane</keyword>
<keyword id="KW-0653">Protein transport</keyword>
<keyword id="KW-1185">Reference proteome</keyword>
<keyword id="KW-0812">Transmembrane</keyword>
<keyword id="KW-1133">Transmembrane helix</keyword>
<keyword id="KW-0813">Transport</keyword>